<evidence type="ECO:0000255" key="1">
    <source>
        <dbReference type="HAMAP-Rule" id="MF_00121"/>
    </source>
</evidence>
<comment type="function">
    <text evidence="1">Allows the formation of correctly charged Asn-tRNA(Asn) or Gln-tRNA(Gln) through the transamidation of misacylated Asp-tRNA(Asn) or Glu-tRNA(Gln) in organisms which lack either or both of asparaginyl-tRNA or glutaminyl-tRNA synthetases. The reaction takes place in the presence of glutamine and ATP through an activated phospho-Asp-tRNA(Asn) or phospho-Glu-tRNA(Gln).</text>
</comment>
<comment type="catalytic activity">
    <reaction evidence="1">
        <text>L-glutamyl-tRNA(Gln) + L-glutamine + ATP + H2O = L-glutaminyl-tRNA(Gln) + L-glutamate + ADP + phosphate + H(+)</text>
        <dbReference type="Rhea" id="RHEA:17521"/>
        <dbReference type="Rhea" id="RHEA-COMP:9681"/>
        <dbReference type="Rhea" id="RHEA-COMP:9684"/>
        <dbReference type="ChEBI" id="CHEBI:15377"/>
        <dbReference type="ChEBI" id="CHEBI:15378"/>
        <dbReference type="ChEBI" id="CHEBI:29985"/>
        <dbReference type="ChEBI" id="CHEBI:30616"/>
        <dbReference type="ChEBI" id="CHEBI:43474"/>
        <dbReference type="ChEBI" id="CHEBI:58359"/>
        <dbReference type="ChEBI" id="CHEBI:78520"/>
        <dbReference type="ChEBI" id="CHEBI:78521"/>
        <dbReference type="ChEBI" id="CHEBI:456216"/>
    </reaction>
</comment>
<comment type="catalytic activity">
    <reaction evidence="1">
        <text>L-aspartyl-tRNA(Asn) + L-glutamine + ATP + H2O = L-asparaginyl-tRNA(Asn) + L-glutamate + ADP + phosphate + 2 H(+)</text>
        <dbReference type="Rhea" id="RHEA:14513"/>
        <dbReference type="Rhea" id="RHEA-COMP:9674"/>
        <dbReference type="Rhea" id="RHEA-COMP:9677"/>
        <dbReference type="ChEBI" id="CHEBI:15377"/>
        <dbReference type="ChEBI" id="CHEBI:15378"/>
        <dbReference type="ChEBI" id="CHEBI:29985"/>
        <dbReference type="ChEBI" id="CHEBI:30616"/>
        <dbReference type="ChEBI" id="CHEBI:43474"/>
        <dbReference type="ChEBI" id="CHEBI:58359"/>
        <dbReference type="ChEBI" id="CHEBI:78515"/>
        <dbReference type="ChEBI" id="CHEBI:78516"/>
        <dbReference type="ChEBI" id="CHEBI:456216"/>
    </reaction>
</comment>
<comment type="subunit">
    <text evidence="1">Heterotrimer of A, B and C subunits.</text>
</comment>
<comment type="similarity">
    <text evidence="1">Belongs to the GatB/GatE family. GatB subfamily.</text>
</comment>
<accession>A0Q2P9</accession>
<reference key="1">
    <citation type="journal article" date="2006" name="Nat. Biotechnol.">
        <title>The genome and transcriptomes of the anti-tumor agent Clostridium novyi-NT.</title>
        <authorList>
            <person name="Bettegowda C."/>
            <person name="Huang X."/>
            <person name="Lin J."/>
            <person name="Cheong I."/>
            <person name="Kohli M."/>
            <person name="Szabo S.A."/>
            <person name="Zhang X."/>
            <person name="Diaz L.A. Jr."/>
            <person name="Velculescu V.E."/>
            <person name="Parmigiani G."/>
            <person name="Kinzler K.W."/>
            <person name="Vogelstein B."/>
            <person name="Zhou S."/>
        </authorList>
    </citation>
    <scope>NUCLEOTIDE SEQUENCE [LARGE SCALE GENOMIC DNA]</scope>
    <source>
        <strain>NT</strain>
    </source>
</reference>
<dbReference type="EC" id="6.3.5.-" evidence="1"/>
<dbReference type="EMBL" id="CP000382">
    <property type="protein sequence ID" value="ABK61629.1"/>
    <property type="molecule type" value="Genomic_DNA"/>
</dbReference>
<dbReference type="RefSeq" id="WP_011722885.1">
    <property type="nucleotide sequence ID" value="NC_008593.1"/>
</dbReference>
<dbReference type="SMR" id="A0Q2P9"/>
<dbReference type="STRING" id="386415.NT01CX_0430"/>
<dbReference type="KEGG" id="cno:NT01CX_0430"/>
<dbReference type="PATRIC" id="fig|386415.7.peg.1934"/>
<dbReference type="eggNOG" id="COG0064">
    <property type="taxonomic scope" value="Bacteria"/>
</dbReference>
<dbReference type="HOGENOM" id="CLU_019240_0_0_9"/>
<dbReference type="Proteomes" id="UP000008220">
    <property type="component" value="Chromosome"/>
</dbReference>
<dbReference type="GO" id="GO:0050566">
    <property type="term" value="F:asparaginyl-tRNA synthase (glutamine-hydrolyzing) activity"/>
    <property type="evidence" value="ECO:0007669"/>
    <property type="project" value="RHEA"/>
</dbReference>
<dbReference type="GO" id="GO:0005524">
    <property type="term" value="F:ATP binding"/>
    <property type="evidence" value="ECO:0007669"/>
    <property type="project" value="UniProtKB-KW"/>
</dbReference>
<dbReference type="GO" id="GO:0050567">
    <property type="term" value="F:glutaminyl-tRNA synthase (glutamine-hydrolyzing) activity"/>
    <property type="evidence" value="ECO:0007669"/>
    <property type="project" value="UniProtKB-UniRule"/>
</dbReference>
<dbReference type="GO" id="GO:0070681">
    <property type="term" value="P:glutaminyl-tRNAGln biosynthesis via transamidation"/>
    <property type="evidence" value="ECO:0007669"/>
    <property type="project" value="TreeGrafter"/>
</dbReference>
<dbReference type="GO" id="GO:0006412">
    <property type="term" value="P:translation"/>
    <property type="evidence" value="ECO:0007669"/>
    <property type="project" value="UniProtKB-UniRule"/>
</dbReference>
<dbReference type="FunFam" id="1.10.10.410:FF:000001">
    <property type="entry name" value="Aspartyl/glutamyl-tRNA(Asn/Gln) amidotransferase subunit B"/>
    <property type="match status" value="1"/>
</dbReference>
<dbReference type="FunFam" id="1.10.150.380:FF:000001">
    <property type="entry name" value="Aspartyl/glutamyl-tRNA(Asn/Gln) amidotransferase subunit B"/>
    <property type="match status" value="1"/>
</dbReference>
<dbReference type="Gene3D" id="1.10.10.410">
    <property type="match status" value="1"/>
</dbReference>
<dbReference type="Gene3D" id="1.10.150.380">
    <property type="entry name" value="GatB domain, N-terminal subdomain"/>
    <property type="match status" value="1"/>
</dbReference>
<dbReference type="HAMAP" id="MF_00121">
    <property type="entry name" value="GatB"/>
    <property type="match status" value="1"/>
</dbReference>
<dbReference type="InterPro" id="IPR017959">
    <property type="entry name" value="Asn/Gln-tRNA_amidoTrfase_suB/E"/>
</dbReference>
<dbReference type="InterPro" id="IPR006075">
    <property type="entry name" value="Asn/Gln-tRNA_Trfase_suB/E_cat"/>
</dbReference>
<dbReference type="InterPro" id="IPR018027">
    <property type="entry name" value="Asn/Gln_amidotransferase"/>
</dbReference>
<dbReference type="InterPro" id="IPR003789">
    <property type="entry name" value="Asn/Gln_tRNA_amidoTrase-B-like"/>
</dbReference>
<dbReference type="InterPro" id="IPR004413">
    <property type="entry name" value="GatB"/>
</dbReference>
<dbReference type="InterPro" id="IPR042114">
    <property type="entry name" value="GatB_C_1"/>
</dbReference>
<dbReference type="InterPro" id="IPR023168">
    <property type="entry name" value="GatB_Yqey_C_2"/>
</dbReference>
<dbReference type="InterPro" id="IPR017958">
    <property type="entry name" value="Gln-tRNA_amidoTrfase_suB_CS"/>
</dbReference>
<dbReference type="InterPro" id="IPR014746">
    <property type="entry name" value="Gln_synth/guanido_kin_cat_dom"/>
</dbReference>
<dbReference type="NCBIfam" id="TIGR00133">
    <property type="entry name" value="gatB"/>
    <property type="match status" value="1"/>
</dbReference>
<dbReference type="NCBIfam" id="NF004012">
    <property type="entry name" value="PRK05477.1-2"/>
    <property type="match status" value="1"/>
</dbReference>
<dbReference type="NCBIfam" id="NF004014">
    <property type="entry name" value="PRK05477.1-4"/>
    <property type="match status" value="1"/>
</dbReference>
<dbReference type="PANTHER" id="PTHR11659">
    <property type="entry name" value="GLUTAMYL-TRNA GLN AMIDOTRANSFERASE SUBUNIT B MITOCHONDRIAL AND PROKARYOTIC PET112-RELATED"/>
    <property type="match status" value="1"/>
</dbReference>
<dbReference type="PANTHER" id="PTHR11659:SF0">
    <property type="entry name" value="GLUTAMYL-TRNA(GLN) AMIDOTRANSFERASE SUBUNIT B, MITOCHONDRIAL"/>
    <property type="match status" value="1"/>
</dbReference>
<dbReference type="Pfam" id="PF02934">
    <property type="entry name" value="GatB_N"/>
    <property type="match status" value="1"/>
</dbReference>
<dbReference type="Pfam" id="PF02637">
    <property type="entry name" value="GatB_Yqey"/>
    <property type="match status" value="1"/>
</dbReference>
<dbReference type="SMART" id="SM00845">
    <property type="entry name" value="GatB_Yqey"/>
    <property type="match status" value="1"/>
</dbReference>
<dbReference type="SUPFAM" id="SSF89095">
    <property type="entry name" value="GatB/YqeY motif"/>
    <property type="match status" value="1"/>
</dbReference>
<dbReference type="SUPFAM" id="SSF55931">
    <property type="entry name" value="Glutamine synthetase/guanido kinase"/>
    <property type="match status" value="1"/>
</dbReference>
<dbReference type="PROSITE" id="PS01234">
    <property type="entry name" value="GATB"/>
    <property type="match status" value="1"/>
</dbReference>
<name>GATB_CLONN</name>
<sequence length="475" mass="54132">MNYEAIIGLEVHCELLTKTKAFCGCSTEFGAKPNTHVCPICLGLPGALPKLNKKVVEYGMKAGIALNCSINKLCRMDRKNYYYVDCPKNYQITQSEYPLCKDGYIEISLENGEAKKISIERIHIEEDAGKLIHNSQGTFVDFNRAGVPLIEIVSNPDMRNSKEAVEYLIHLRSVLKAIGVSDCKMEEGSLRCDANISVREKGNKEFGVKCEIKNMNSFKALEKALNYEFERQIEVLKNGGKVIQETRRWDEENNKTVVMRSKEDANDYRYFPDGDLVSINISDNWIEEIKESIGELPHEKEKRFIEQYEIPKYDTKIITSSLEMAEFFEEATKISKNAKAVSNWLMGDISRLLNKNNIKIEEIKFSPKDLGEFIKLIDKKIISNSIGKDLIEEMFLTGKSPKDIVEEKGLVQNNNKEEILEIVKKVLHDNPENVTSYKNGKTKLLGYFVGQVMKITKGKANPKIVNEIILKELNM</sequence>
<feature type="chain" id="PRO_1000015961" description="Aspartyl/glutamyl-tRNA(Asn/Gln) amidotransferase subunit B">
    <location>
        <begin position="1"/>
        <end position="475"/>
    </location>
</feature>
<keyword id="KW-0067">ATP-binding</keyword>
<keyword id="KW-0436">Ligase</keyword>
<keyword id="KW-0547">Nucleotide-binding</keyword>
<keyword id="KW-0648">Protein biosynthesis</keyword>
<keyword id="KW-1185">Reference proteome</keyword>
<protein>
    <recommendedName>
        <fullName evidence="1">Aspartyl/glutamyl-tRNA(Asn/Gln) amidotransferase subunit B</fullName>
        <shortName evidence="1">Asp/Glu-ADT subunit B</shortName>
        <ecNumber evidence="1">6.3.5.-</ecNumber>
    </recommendedName>
</protein>
<organism>
    <name type="scientific">Clostridium novyi (strain NT)</name>
    <dbReference type="NCBI Taxonomy" id="386415"/>
    <lineage>
        <taxon>Bacteria</taxon>
        <taxon>Bacillati</taxon>
        <taxon>Bacillota</taxon>
        <taxon>Clostridia</taxon>
        <taxon>Eubacteriales</taxon>
        <taxon>Clostridiaceae</taxon>
        <taxon>Clostridium</taxon>
    </lineage>
</organism>
<proteinExistence type="inferred from homology"/>
<gene>
    <name evidence="1" type="primary">gatB</name>
    <name type="ordered locus">NT01CX_0430</name>
</gene>